<feature type="propeptide" id="PRO_0000015693" evidence="3">
    <location>
        <begin position="1" status="less than"/>
        <end position="19"/>
    </location>
</feature>
<feature type="chain" id="PRO_0000015694" description="Insulin-like growth factor 1">
    <location>
        <begin position="20"/>
        <end position="89"/>
    </location>
</feature>
<feature type="propeptide" id="PRO_0000015695" description="E peptide">
    <location>
        <begin position="90"/>
        <end position="124"/>
    </location>
</feature>
<feature type="region of interest" description="B">
    <location>
        <begin position="20"/>
        <end position="48"/>
    </location>
</feature>
<feature type="region of interest" description="C">
    <location>
        <begin position="49"/>
        <end position="60"/>
    </location>
</feature>
<feature type="region of interest" description="A">
    <location>
        <begin position="61"/>
        <end position="81"/>
    </location>
</feature>
<feature type="region of interest" description="D">
    <location>
        <begin position="82"/>
        <end position="89"/>
    </location>
</feature>
<feature type="region of interest" description="Disordered" evidence="4">
    <location>
        <begin position="86"/>
        <end position="124"/>
    </location>
</feature>
<feature type="compositionally biased region" description="Basic and acidic residues" evidence="4">
    <location>
        <begin position="96"/>
        <end position="109"/>
    </location>
</feature>
<feature type="compositionally biased region" description="Polar residues" evidence="4">
    <location>
        <begin position="110"/>
        <end position="124"/>
    </location>
</feature>
<feature type="disulfide bond" evidence="1">
    <location>
        <begin position="25"/>
        <end position="67"/>
    </location>
</feature>
<feature type="disulfide bond" evidence="1">
    <location>
        <begin position="37"/>
        <end position="80"/>
    </location>
</feature>
<feature type="disulfide bond" evidence="1">
    <location>
        <begin position="66"/>
        <end position="71"/>
    </location>
</feature>
<feature type="non-terminal residue">
    <location>
        <position position="1"/>
    </location>
</feature>
<name>IGF1_COTJA</name>
<comment type="function">
    <text evidence="2">The insulin-like growth factors, isolated from plasma, are structurally and functionally related to insulin but have a much higher growth-promoting activity. Acts as a ligand for IGF1R. Binds to the alpha subunit of IGF1R, leading to the activation of the intrinsic tyrosine kinase activity which autophosphorylates tyrosine residues in the beta subunit thus initiatiating a cascade of down-stream signaling events leading to activation of the PI3K-AKT/PKB and the Ras-MAPK pathways. Binds to integrins. Its binding to integrins and subsequent ternary complex formation with integrins and IGFR1 are essential for IGF1 signaling.</text>
</comment>
<comment type="subcellular location">
    <subcellularLocation>
        <location>Secreted</location>
    </subcellularLocation>
</comment>
<comment type="similarity">
    <text evidence="6">Belongs to the insulin family.</text>
</comment>
<keyword id="KW-1015">Disulfide bond</keyword>
<keyword id="KW-0339">Growth factor</keyword>
<keyword id="KW-1185">Reference proteome</keyword>
<keyword id="KW-0964">Secreted</keyword>
<proteinExistence type="evidence at transcript level"/>
<reference key="1">
    <citation type="journal article" date="1994" name="Comp. Biochem. Physiol.">
        <title>Insulin-like growth factor-I messenger RNA content in the oviduct of Japanese quail (Coturnix coturnix japonica): changes during growth and development or after estrogen administration.</title>
        <authorList>
            <person name="Kida S."/>
            <person name="Iwaki M."/>
            <person name="Nakamura A."/>
            <person name="Miura Y."/>
            <person name="Takenaka A."/>
            <person name="Takahashi S."/>
            <person name="Noguchi T."/>
        </authorList>
    </citation>
    <scope>NUCLEOTIDE SEQUENCE [MRNA]</scope>
</reference>
<dbReference type="EMBL" id="S75247">
    <property type="status" value="NOT_ANNOTATED_CDS"/>
    <property type="molecule type" value="mRNA"/>
</dbReference>
<dbReference type="SMR" id="P51462"/>
<dbReference type="Proteomes" id="UP000694412">
    <property type="component" value="Unplaced"/>
</dbReference>
<dbReference type="GO" id="GO:0005615">
    <property type="term" value="C:extracellular space"/>
    <property type="evidence" value="ECO:0007669"/>
    <property type="project" value="InterPro"/>
</dbReference>
<dbReference type="GO" id="GO:0008083">
    <property type="term" value="F:growth factor activity"/>
    <property type="evidence" value="ECO:0007669"/>
    <property type="project" value="UniProtKB-KW"/>
</dbReference>
<dbReference type="GO" id="GO:0005179">
    <property type="term" value="F:hormone activity"/>
    <property type="evidence" value="ECO:0007669"/>
    <property type="project" value="InterPro"/>
</dbReference>
<dbReference type="GO" id="GO:0005159">
    <property type="term" value="F:insulin-like growth factor receptor binding"/>
    <property type="evidence" value="ECO:0007669"/>
    <property type="project" value="TreeGrafter"/>
</dbReference>
<dbReference type="GO" id="GO:0008283">
    <property type="term" value="P:cell population proliferation"/>
    <property type="evidence" value="ECO:0007669"/>
    <property type="project" value="TreeGrafter"/>
</dbReference>
<dbReference type="GO" id="GO:0048009">
    <property type="term" value="P:insulin-like growth factor receptor signaling pathway"/>
    <property type="evidence" value="ECO:0007669"/>
    <property type="project" value="TreeGrafter"/>
</dbReference>
<dbReference type="GO" id="GO:0043066">
    <property type="term" value="P:negative regulation of apoptotic process"/>
    <property type="evidence" value="ECO:0000250"/>
    <property type="project" value="UniProtKB"/>
</dbReference>
<dbReference type="GO" id="GO:0090201">
    <property type="term" value="P:negative regulation of release of cytochrome c from mitochondria"/>
    <property type="evidence" value="ECO:0000250"/>
    <property type="project" value="UniProtKB"/>
</dbReference>
<dbReference type="GO" id="GO:0008284">
    <property type="term" value="P:positive regulation of cell population proliferation"/>
    <property type="evidence" value="ECO:0007669"/>
    <property type="project" value="TreeGrafter"/>
</dbReference>
<dbReference type="GO" id="GO:0051897">
    <property type="term" value="P:positive regulation of phosphatidylinositol 3-kinase/protein kinase B signal transduction"/>
    <property type="evidence" value="ECO:0007669"/>
    <property type="project" value="TreeGrafter"/>
</dbReference>
<dbReference type="CDD" id="cd04368">
    <property type="entry name" value="IlGF"/>
    <property type="match status" value="1"/>
</dbReference>
<dbReference type="FunFam" id="1.10.100.10:FF:000001">
    <property type="entry name" value="insulin-like growth factor I isoform X1"/>
    <property type="match status" value="1"/>
</dbReference>
<dbReference type="Gene3D" id="1.10.100.10">
    <property type="entry name" value="Insulin-like"/>
    <property type="match status" value="1"/>
</dbReference>
<dbReference type="InterPro" id="IPR022341">
    <property type="entry name" value="IGF-I"/>
</dbReference>
<dbReference type="InterPro" id="IPR016179">
    <property type="entry name" value="Insulin-like"/>
</dbReference>
<dbReference type="InterPro" id="IPR022350">
    <property type="entry name" value="Insulin-like_growth_factor"/>
</dbReference>
<dbReference type="InterPro" id="IPR036438">
    <property type="entry name" value="Insulin-like_sf"/>
</dbReference>
<dbReference type="InterPro" id="IPR022353">
    <property type="entry name" value="Insulin_CS"/>
</dbReference>
<dbReference type="InterPro" id="IPR022352">
    <property type="entry name" value="Insulin_family"/>
</dbReference>
<dbReference type="PANTHER" id="PTHR46845">
    <property type="entry name" value="INSULIN-LIKE GROWTH FACTOR I"/>
    <property type="match status" value="1"/>
</dbReference>
<dbReference type="PANTHER" id="PTHR46845:SF1">
    <property type="entry name" value="INSULIN-LIKE GROWTH FACTOR I"/>
    <property type="match status" value="1"/>
</dbReference>
<dbReference type="Pfam" id="PF00049">
    <property type="entry name" value="Insulin"/>
    <property type="match status" value="1"/>
</dbReference>
<dbReference type="PRINTS" id="PR02002">
    <property type="entry name" value="INSLNLIKEGF"/>
</dbReference>
<dbReference type="PRINTS" id="PR02005">
    <property type="entry name" value="INSLNLIKEGF1"/>
</dbReference>
<dbReference type="PRINTS" id="PR00276">
    <property type="entry name" value="INSULINFAMLY"/>
</dbReference>
<dbReference type="SMART" id="SM00078">
    <property type="entry name" value="IlGF"/>
    <property type="match status" value="1"/>
</dbReference>
<dbReference type="SUPFAM" id="SSF56994">
    <property type="entry name" value="Insulin-like"/>
    <property type="match status" value="1"/>
</dbReference>
<dbReference type="PROSITE" id="PS00262">
    <property type="entry name" value="INSULIN"/>
    <property type="match status" value="1"/>
</dbReference>
<evidence type="ECO:0000250" key="1"/>
<evidence type="ECO:0000250" key="2">
    <source>
        <dbReference type="UniProtKB" id="P05019"/>
    </source>
</evidence>
<evidence type="ECO:0000255" key="3"/>
<evidence type="ECO:0000256" key="4">
    <source>
        <dbReference type="SAM" id="MobiDB-lite"/>
    </source>
</evidence>
<evidence type="ECO:0000303" key="5">
    <source>
    </source>
</evidence>
<evidence type="ECO:0000305" key="6"/>
<sequence length="124" mass="13888">IHFFYLGLCLLTLTSSAAAGPETLCGAELVDALQFVCGDRGFYFSKPTGYGSSSRRLHHKGIVDECCFQSCDLRRLEMYCAPIKPPKSARSVRAQRHTDMPKAQKEVHLKNTSRGNTGNRNYRM</sequence>
<gene>
    <name evidence="2" type="primary">IGF1</name>
    <name evidence="2" type="synonym">IGF-1</name>
</gene>
<organism>
    <name type="scientific">Coturnix japonica</name>
    <name type="common">Japanese quail</name>
    <name type="synonym">Coturnix coturnix japonica</name>
    <dbReference type="NCBI Taxonomy" id="93934"/>
    <lineage>
        <taxon>Eukaryota</taxon>
        <taxon>Metazoa</taxon>
        <taxon>Chordata</taxon>
        <taxon>Craniata</taxon>
        <taxon>Vertebrata</taxon>
        <taxon>Euteleostomi</taxon>
        <taxon>Archelosauria</taxon>
        <taxon>Archosauria</taxon>
        <taxon>Dinosauria</taxon>
        <taxon>Saurischia</taxon>
        <taxon>Theropoda</taxon>
        <taxon>Coelurosauria</taxon>
        <taxon>Aves</taxon>
        <taxon>Neognathae</taxon>
        <taxon>Galloanserae</taxon>
        <taxon>Galliformes</taxon>
        <taxon>Phasianidae</taxon>
        <taxon>Perdicinae</taxon>
        <taxon>Coturnix</taxon>
    </lineage>
</organism>
<accession>P51462</accession>
<protein>
    <recommendedName>
        <fullName evidence="2">Insulin-like growth factor 1</fullName>
    </recommendedName>
    <alternativeName>
        <fullName evidence="5">Insulin-like growth factor I</fullName>
        <shortName evidence="5">IGF-I</shortName>
    </alternativeName>
    <alternativeName>
        <fullName>Somatomedin</fullName>
    </alternativeName>
</protein>